<protein>
    <recommendedName>
        <fullName evidence="1">Endonuclease MutS2</fullName>
        <ecNumber evidence="1">3.1.-.-</ecNumber>
    </recommendedName>
    <alternativeName>
        <fullName evidence="1">Ribosome-associated protein quality control-upstream factor</fullName>
        <shortName evidence="1">RQC-upstream factor</shortName>
        <shortName evidence="1">RqcU</shortName>
        <ecNumber evidence="1">3.6.4.-</ecNumber>
    </alternativeName>
</protein>
<proteinExistence type="inferred from homology"/>
<keyword id="KW-0067">ATP-binding</keyword>
<keyword id="KW-0238">DNA-binding</keyword>
<keyword id="KW-0255">Endonuclease</keyword>
<keyword id="KW-0378">Hydrolase</keyword>
<keyword id="KW-0540">Nuclease</keyword>
<keyword id="KW-0547">Nucleotide-binding</keyword>
<keyword id="KW-1185">Reference proteome</keyword>
<keyword id="KW-0694">RNA-binding</keyword>
<keyword id="KW-0699">rRNA-binding</keyword>
<evidence type="ECO:0000255" key="1">
    <source>
        <dbReference type="HAMAP-Rule" id="MF_00092"/>
    </source>
</evidence>
<comment type="function">
    <text evidence="1">Endonuclease that is involved in the suppression of homologous recombination and thus may have a key role in the control of bacterial genetic diversity.</text>
</comment>
<comment type="function">
    <text evidence="1">Acts as a ribosome collision sensor, splitting the ribosome into its 2 subunits. Detects stalled/collided 70S ribosomes which it binds and splits by an ATP-hydrolysis driven conformational change. Acts upstream of the ribosome quality control system (RQC), a ribosome-associated complex that mediates the extraction of incompletely synthesized nascent chains from stalled ribosomes and their subsequent degradation. Probably generates substrates for RQC.</text>
</comment>
<comment type="subunit">
    <text evidence="1">Homodimer. Binds to stalled ribosomes, contacting rRNA.</text>
</comment>
<comment type="similarity">
    <text evidence="1">Belongs to the DNA mismatch repair MutS family. MutS2 subfamily.</text>
</comment>
<dbReference type="EC" id="3.1.-.-" evidence="1"/>
<dbReference type="EC" id="3.6.4.-" evidence="1"/>
<dbReference type="EMBL" id="AE015927">
    <property type="protein sequence ID" value="AAO36754.1"/>
    <property type="molecule type" value="Genomic_DNA"/>
</dbReference>
<dbReference type="RefSeq" id="WP_011100415.1">
    <property type="nucleotide sequence ID" value="NC_004557.1"/>
</dbReference>
<dbReference type="SMR" id="Q891U1"/>
<dbReference type="STRING" id="212717.CTC_02274"/>
<dbReference type="GeneID" id="24253540"/>
<dbReference type="KEGG" id="ctc:CTC_02274"/>
<dbReference type="HOGENOM" id="CLU_011252_2_1_9"/>
<dbReference type="OrthoDB" id="9808166at2"/>
<dbReference type="Proteomes" id="UP000001412">
    <property type="component" value="Chromosome"/>
</dbReference>
<dbReference type="GO" id="GO:0005524">
    <property type="term" value="F:ATP binding"/>
    <property type="evidence" value="ECO:0007669"/>
    <property type="project" value="UniProtKB-UniRule"/>
</dbReference>
<dbReference type="GO" id="GO:0016887">
    <property type="term" value="F:ATP hydrolysis activity"/>
    <property type="evidence" value="ECO:0007669"/>
    <property type="project" value="InterPro"/>
</dbReference>
<dbReference type="GO" id="GO:0140664">
    <property type="term" value="F:ATP-dependent DNA damage sensor activity"/>
    <property type="evidence" value="ECO:0007669"/>
    <property type="project" value="InterPro"/>
</dbReference>
<dbReference type="GO" id="GO:0004519">
    <property type="term" value="F:endonuclease activity"/>
    <property type="evidence" value="ECO:0007669"/>
    <property type="project" value="UniProtKB-UniRule"/>
</dbReference>
<dbReference type="GO" id="GO:0030983">
    <property type="term" value="F:mismatched DNA binding"/>
    <property type="evidence" value="ECO:0007669"/>
    <property type="project" value="InterPro"/>
</dbReference>
<dbReference type="GO" id="GO:0043023">
    <property type="term" value="F:ribosomal large subunit binding"/>
    <property type="evidence" value="ECO:0007669"/>
    <property type="project" value="UniProtKB-UniRule"/>
</dbReference>
<dbReference type="GO" id="GO:0019843">
    <property type="term" value="F:rRNA binding"/>
    <property type="evidence" value="ECO:0007669"/>
    <property type="project" value="UniProtKB-UniRule"/>
</dbReference>
<dbReference type="GO" id="GO:0006298">
    <property type="term" value="P:mismatch repair"/>
    <property type="evidence" value="ECO:0007669"/>
    <property type="project" value="InterPro"/>
</dbReference>
<dbReference type="GO" id="GO:0045910">
    <property type="term" value="P:negative regulation of DNA recombination"/>
    <property type="evidence" value="ECO:0007669"/>
    <property type="project" value="InterPro"/>
</dbReference>
<dbReference type="GO" id="GO:0072344">
    <property type="term" value="P:rescue of stalled ribosome"/>
    <property type="evidence" value="ECO:0007669"/>
    <property type="project" value="UniProtKB-UniRule"/>
</dbReference>
<dbReference type="CDD" id="cd03280">
    <property type="entry name" value="ABC_MutS2"/>
    <property type="match status" value="1"/>
</dbReference>
<dbReference type="CDD" id="cd06503">
    <property type="entry name" value="ATP-synt_Fo_b"/>
    <property type="match status" value="1"/>
</dbReference>
<dbReference type="FunFam" id="3.30.1370.110:FF:000007">
    <property type="entry name" value="Endonuclease MutS2"/>
    <property type="match status" value="1"/>
</dbReference>
<dbReference type="FunFam" id="3.40.50.300:FF:000830">
    <property type="entry name" value="Endonuclease MutS2"/>
    <property type="match status" value="1"/>
</dbReference>
<dbReference type="Gene3D" id="3.30.1370.110">
    <property type="match status" value="1"/>
</dbReference>
<dbReference type="Gene3D" id="3.40.50.300">
    <property type="entry name" value="P-loop containing nucleotide triphosphate hydrolases"/>
    <property type="match status" value="1"/>
</dbReference>
<dbReference type="HAMAP" id="MF_00092">
    <property type="entry name" value="MutS2"/>
    <property type="match status" value="1"/>
</dbReference>
<dbReference type="InterPro" id="IPR000432">
    <property type="entry name" value="DNA_mismatch_repair_MutS_C"/>
</dbReference>
<dbReference type="InterPro" id="IPR007696">
    <property type="entry name" value="DNA_mismatch_repair_MutS_core"/>
</dbReference>
<dbReference type="InterPro" id="IPR036187">
    <property type="entry name" value="DNA_mismatch_repair_MutS_sf"/>
</dbReference>
<dbReference type="InterPro" id="IPR046893">
    <property type="entry name" value="MSSS"/>
</dbReference>
<dbReference type="InterPro" id="IPR045076">
    <property type="entry name" value="MutS"/>
</dbReference>
<dbReference type="InterPro" id="IPR005747">
    <property type="entry name" value="MutS2"/>
</dbReference>
<dbReference type="InterPro" id="IPR027417">
    <property type="entry name" value="P-loop_NTPase"/>
</dbReference>
<dbReference type="InterPro" id="IPR002625">
    <property type="entry name" value="Smr_dom"/>
</dbReference>
<dbReference type="InterPro" id="IPR036063">
    <property type="entry name" value="Smr_dom_sf"/>
</dbReference>
<dbReference type="NCBIfam" id="TIGR01069">
    <property type="entry name" value="mutS2"/>
    <property type="match status" value="1"/>
</dbReference>
<dbReference type="PANTHER" id="PTHR48466:SF2">
    <property type="entry name" value="OS10G0509000 PROTEIN"/>
    <property type="match status" value="1"/>
</dbReference>
<dbReference type="PANTHER" id="PTHR48466">
    <property type="entry name" value="OS10G0509000 PROTEIN-RELATED"/>
    <property type="match status" value="1"/>
</dbReference>
<dbReference type="Pfam" id="PF20297">
    <property type="entry name" value="MSSS"/>
    <property type="match status" value="1"/>
</dbReference>
<dbReference type="Pfam" id="PF00488">
    <property type="entry name" value="MutS_V"/>
    <property type="match status" value="1"/>
</dbReference>
<dbReference type="Pfam" id="PF01713">
    <property type="entry name" value="Smr"/>
    <property type="match status" value="1"/>
</dbReference>
<dbReference type="PIRSF" id="PIRSF005814">
    <property type="entry name" value="MutS_YshD"/>
    <property type="match status" value="1"/>
</dbReference>
<dbReference type="SMART" id="SM00534">
    <property type="entry name" value="MUTSac"/>
    <property type="match status" value="1"/>
</dbReference>
<dbReference type="SMART" id="SM00533">
    <property type="entry name" value="MUTSd"/>
    <property type="match status" value="1"/>
</dbReference>
<dbReference type="SMART" id="SM00463">
    <property type="entry name" value="SMR"/>
    <property type="match status" value="1"/>
</dbReference>
<dbReference type="SUPFAM" id="SSF48334">
    <property type="entry name" value="DNA repair protein MutS, domain III"/>
    <property type="match status" value="1"/>
</dbReference>
<dbReference type="SUPFAM" id="SSF52540">
    <property type="entry name" value="P-loop containing nucleoside triphosphate hydrolases"/>
    <property type="match status" value="1"/>
</dbReference>
<dbReference type="SUPFAM" id="SSF160443">
    <property type="entry name" value="SMR domain-like"/>
    <property type="match status" value="1"/>
</dbReference>
<dbReference type="PROSITE" id="PS00486">
    <property type="entry name" value="DNA_MISMATCH_REPAIR_2"/>
    <property type="match status" value="1"/>
</dbReference>
<dbReference type="PROSITE" id="PS50828">
    <property type="entry name" value="SMR"/>
    <property type="match status" value="1"/>
</dbReference>
<reference key="1">
    <citation type="journal article" date="2003" name="Proc. Natl. Acad. Sci. U.S.A.">
        <title>The genome sequence of Clostridium tetani, the causative agent of tetanus disease.</title>
        <authorList>
            <person name="Brueggemann H."/>
            <person name="Baeumer S."/>
            <person name="Fricke W.F."/>
            <person name="Wiezer A."/>
            <person name="Liesegang H."/>
            <person name="Decker I."/>
            <person name="Herzberg C."/>
            <person name="Martinez-Arias R."/>
            <person name="Merkl R."/>
            <person name="Henne A."/>
            <person name="Gottschalk G."/>
        </authorList>
    </citation>
    <scope>NUCLEOTIDE SEQUENCE [LARGE SCALE GENOMIC DNA]</scope>
    <source>
        <strain>Massachusetts / E88</strain>
    </source>
</reference>
<sequence>MNERALKVLEFYKIKEKLKGFVKTNAAKDIVDNLKPYTNLYEVEMHLEETMEALDLLQTKGEPPFEGVYDIRDILIRVEKAMVLLPGQLLKVASILKSSRRFKDYVGRKHEETPHKNIEDICEGIELLKGLEESIFNIVISDDEIADRASLKLYGIRRSLRDKNDSLRDRVNSLVRKYSPYLQESIYTIRGDRYVLPVRAEHKGSVPGLVHDQSSSGATLFIEPMSLVNLNNEIKELLLKEREEIERILEELSLKVYNNLDVVNVNAKVIWELDFIFAKAKFASHNNCTLPKVSEDGIVDIIEGKHPLIDTEKVVPTDIYLGKDFTSLIITGPNTGGKTVTLKTLGLIHIMGLSGLLIPAKENSTIAFFEEIFADIGDEQSIEQSLSTFSSHMVNIVDIISKADHKSLVLFDELGAGTDPTEGAALAISILENLRRRKCKIVATTHYSELKGYALKTEDVENASVEFDVETLRPTYRLLIGIPGKSNAFEISKRLGLGEDIIEEAKNNIESDSLKFEALIEKLQSKSIKASDDARRAEMYKLEADRLKDKYEDKLKIVEETREKLLKGAQEEAKKLIKEAKEEADEILKNIRELEKMGYSSTARQKLEEERKKLNSKIHKLEEKEENLNKEKGKKIKEINLGEEVYLPKLDQKVIILSKPDNRGEVQVQAGIMKINVKLDDLRLVDKPKEENKKGRKREAKLRMRTVESEIDLRGMDSMEAVYNTDKYLDEAYVAGLKEVTVIHGKGTGILRKSINDMLKRHPQVKNYRLGEYGEGGTGVTVVELK</sequence>
<accession>Q891U1</accession>
<name>MUTS2_CLOTE</name>
<gene>
    <name evidence="1" type="primary">mutS2</name>
    <name type="synonym">mutS</name>
    <name evidence="1" type="synonym">rqcU</name>
    <name type="ordered locus">CTC_02274</name>
</gene>
<organism>
    <name type="scientific">Clostridium tetani (strain Massachusetts / E88)</name>
    <dbReference type="NCBI Taxonomy" id="212717"/>
    <lineage>
        <taxon>Bacteria</taxon>
        <taxon>Bacillati</taxon>
        <taxon>Bacillota</taxon>
        <taxon>Clostridia</taxon>
        <taxon>Eubacteriales</taxon>
        <taxon>Clostridiaceae</taxon>
        <taxon>Clostridium</taxon>
    </lineage>
</organism>
<feature type="chain" id="PRO_0000115221" description="Endonuclease MutS2">
    <location>
        <begin position="1"/>
        <end position="786"/>
    </location>
</feature>
<feature type="domain" description="Smr" evidence="1">
    <location>
        <begin position="711"/>
        <end position="786"/>
    </location>
</feature>
<feature type="binding site" evidence="1">
    <location>
        <begin position="332"/>
        <end position="339"/>
    </location>
    <ligand>
        <name>ATP</name>
        <dbReference type="ChEBI" id="CHEBI:30616"/>
    </ligand>
</feature>